<sequence length="172" mass="20579">MSAQVSLELHHRISQFLFHEASLLDDWKFRDWLAQLDEEIRYTMRTTVNAQTRDRRKGVQPPTTWIFNDTKDQLERRIARLETGMAWAEEPPSRTRHLISNCQISETDIPNVFAVRVNYLLYRAQKERDETFYVGTRFDKVRRLEDDNWRLLERDIVLDQAVITSHNLSVLF</sequence>
<proteinExistence type="inferred from homology"/>
<dbReference type="EC" id="1.14.12.19" evidence="1"/>
<dbReference type="EMBL" id="CP000948">
    <property type="protein sequence ID" value="ACB03691.1"/>
    <property type="molecule type" value="Genomic_DNA"/>
</dbReference>
<dbReference type="RefSeq" id="WP_001276072.1">
    <property type="nucleotide sequence ID" value="NC_010473.1"/>
</dbReference>
<dbReference type="SMR" id="B1XB14"/>
<dbReference type="GeneID" id="75206232"/>
<dbReference type="KEGG" id="ecd:ECDH10B_2706"/>
<dbReference type="HOGENOM" id="CLU_102527_1_1_6"/>
<dbReference type="UniPathway" id="UPA00714"/>
<dbReference type="GO" id="GO:0008695">
    <property type="term" value="F:3-phenylpropionate dioxygenase activity"/>
    <property type="evidence" value="ECO:0007669"/>
    <property type="project" value="UniProtKB-UniRule"/>
</dbReference>
<dbReference type="GO" id="GO:0019380">
    <property type="term" value="P:3-phenylpropionate catabolic process"/>
    <property type="evidence" value="ECO:0007669"/>
    <property type="project" value="UniProtKB-UniRule"/>
</dbReference>
<dbReference type="CDD" id="cd00667">
    <property type="entry name" value="ring_hydroxylating_dioxygenases_beta"/>
    <property type="match status" value="1"/>
</dbReference>
<dbReference type="FunFam" id="3.10.450.50:FF:000008">
    <property type="entry name" value="3-phenylpropionate/cinnamic acid dioxygenase subunit beta"/>
    <property type="match status" value="1"/>
</dbReference>
<dbReference type="Gene3D" id="3.10.450.50">
    <property type="match status" value="1"/>
</dbReference>
<dbReference type="HAMAP" id="MF_01649">
    <property type="entry name" value="HcaF"/>
    <property type="match status" value="1"/>
</dbReference>
<dbReference type="InterPro" id="IPR054881">
    <property type="entry name" value="3PPDioc_HcaF"/>
</dbReference>
<dbReference type="InterPro" id="IPR023712">
    <property type="entry name" value="HcaF"/>
</dbReference>
<dbReference type="InterPro" id="IPR032710">
    <property type="entry name" value="NTF2-like_dom_sf"/>
</dbReference>
<dbReference type="InterPro" id="IPR000391">
    <property type="entry name" value="Rng_hydr_dOase-bsu"/>
</dbReference>
<dbReference type="NCBIfam" id="NF042947">
    <property type="entry name" value="3PPDioc_HcaF"/>
    <property type="match status" value="1"/>
</dbReference>
<dbReference type="NCBIfam" id="NF007479">
    <property type="entry name" value="PRK10069.1"/>
    <property type="match status" value="1"/>
</dbReference>
<dbReference type="PANTHER" id="PTHR41534:SF2">
    <property type="entry name" value="3-PHENYLPROPIONATE_CINNAMIC ACID DIOXYGENASE SUBUNIT BETA"/>
    <property type="match status" value="1"/>
</dbReference>
<dbReference type="PANTHER" id="PTHR41534">
    <property type="entry name" value="BLR3401 PROTEIN"/>
    <property type="match status" value="1"/>
</dbReference>
<dbReference type="Pfam" id="PF00866">
    <property type="entry name" value="Ring_hydroxyl_B"/>
    <property type="match status" value="1"/>
</dbReference>
<dbReference type="SUPFAM" id="SSF54427">
    <property type="entry name" value="NTF2-like"/>
    <property type="match status" value="1"/>
</dbReference>
<accession>B1XB14</accession>
<evidence type="ECO:0000255" key="1">
    <source>
        <dbReference type="HAMAP-Rule" id="MF_01649"/>
    </source>
</evidence>
<comment type="function">
    <text evidence="1">Part of the multicomponent 3-phenylpropionate dioxygenase. Converts 3-phenylpropionic acid (PP) and cinnamic acid (CI) into 3-phenylpropionate-dihydrodiol (PP-dihydrodiol) and cinnamic acid-dihydrodiol (CI-dihydrodiol), respectively.</text>
</comment>
<comment type="catalytic activity">
    <reaction evidence="1">
        <text>3-phenylpropanoate + NADH + O2 + H(+) = 3-(cis-5,6-dihydroxycyclohexa-1,3-dien-1-yl)propanoate + NAD(+)</text>
        <dbReference type="Rhea" id="RHEA:20357"/>
        <dbReference type="ChEBI" id="CHEBI:15378"/>
        <dbReference type="ChEBI" id="CHEBI:15379"/>
        <dbReference type="ChEBI" id="CHEBI:51057"/>
        <dbReference type="ChEBI" id="CHEBI:57540"/>
        <dbReference type="ChEBI" id="CHEBI:57945"/>
        <dbReference type="ChEBI" id="CHEBI:60087"/>
        <dbReference type="EC" id="1.14.12.19"/>
    </reaction>
</comment>
<comment type="catalytic activity">
    <reaction evidence="1">
        <text>(E)-cinnamate + NADH + O2 + H(+) = (2E)-3-(cis-5,6-dihydroxycyclohexa-1,3-dien-1-yl)prop-2-enoate + NAD(+)</text>
        <dbReference type="Rhea" id="RHEA:25058"/>
        <dbReference type="ChEBI" id="CHEBI:15378"/>
        <dbReference type="ChEBI" id="CHEBI:15379"/>
        <dbReference type="ChEBI" id="CHEBI:15669"/>
        <dbReference type="ChEBI" id="CHEBI:57540"/>
        <dbReference type="ChEBI" id="CHEBI:57945"/>
        <dbReference type="ChEBI" id="CHEBI:61451"/>
        <dbReference type="EC" id="1.14.12.19"/>
    </reaction>
</comment>
<comment type="pathway">
    <text evidence="1">Aromatic compound metabolism; 3-phenylpropanoate degradation.</text>
</comment>
<comment type="subunit">
    <text evidence="1">This dioxygenase system consists of four proteins: the two subunits of the hydroxylase component (HcaE and HcaF), a ferredoxin (HcaC) and a ferredoxin reductase (HcaD).</text>
</comment>
<comment type="similarity">
    <text evidence="1">Belongs to the bacterial ring-hydroxylating dioxygenase beta subunit family.</text>
</comment>
<name>HCAF_ECODH</name>
<protein>
    <recommendedName>
        <fullName evidence="1">3-phenylpropionate/cinnamic acid dioxygenase subunit beta</fullName>
        <ecNumber evidence="1">1.14.12.19</ecNumber>
    </recommendedName>
</protein>
<gene>
    <name evidence="1" type="primary">hcaF</name>
    <name type="ordered locus">ECDH10B_2706</name>
</gene>
<feature type="chain" id="PRO_1000186976" description="3-phenylpropionate/cinnamic acid dioxygenase subunit beta">
    <location>
        <begin position="1"/>
        <end position="172"/>
    </location>
</feature>
<reference key="1">
    <citation type="journal article" date="2008" name="J. Bacteriol.">
        <title>The complete genome sequence of Escherichia coli DH10B: insights into the biology of a laboratory workhorse.</title>
        <authorList>
            <person name="Durfee T."/>
            <person name="Nelson R."/>
            <person name="Baldwin S."/>
            <person name="Plunkett G. III"/>
            <person name="Burland V."/>
            <person name="Mau B."/>
            <person name="Petrosino J.F."/>
            <person name="Qin X."/>
            <person name="Muzny D.M."/>
            <person name="Ayele M."/>
            <person name="Gibbs R.A."/>
            <person name="Csorgo B."/>
            <person name="Posfai G."/>
            <person name="Weinstock G.M."/>
            <person name="Blattner F.R."/>
        </authorList>
    </citation>
    <scope>NUCLEOTIDE SEQUENCE [LARGE SCALE GENOMIC DNA]</scope>
    <source>
        <strain>K12 / DH10B</strain>
    </source>
</reference>
<keyword id="KW-0058">Aromatic hydrocarbons catabolism</keyword>
<keyword id="KW-0223">Dioxygenase</keyword>
<keyword id="KW-0520">NAD</keyword>
<keyword id="KW-0560">Oxidoreductase</keyword>
<organism>
    <name type="scientific">Escherichia coli (strain K12 / DH10B)</name>
    <dbReference type="NCBI Taxonomy" id="316385"/>
    <lineage>
        <taxon>Bacteria</taxon>
        <taxon>Pseudomonadati</taxon>
        <taxon>Pseudomonadota</taxon>
        <taxon>Gammaproteobacteria</taxon>
        <taxon>Enterobacterales</taxon>
        <taxon>Enterobacteriaceae</taxon>
        <taxon>Escherichia</taxon>
    </lineage>
</organism>